<proteinExistence type="inferred from homology"/>
<comment type="similarity">
    <text evidence="1">Belongs to the universal ribosomal protein uS2 family.</text>
</comment>
<comment type="sequence caution" evidence="3">
    <conflict type="erroneous initiation">
        <sequence resource="EMBL-CDS" id="AAN25298"/>
    </conflict>
</comment>
<reference key="1">
    <citation type="journal article" date="2002" name="Proc. Natl. Acad. Sci. U.S.A.">
        <title>The genome sequence of Bifidobacterium longum reflects its adaptation to the human gastrointestinal tract.</title>
        <authorList>
            <person name="Schell M.A."/>
            <person name="Karmirantzou M."/>
            <person name="Snel B."/>
            <person name="Vilanova D."/>
            <person name="Berger B."/>
            <person name="Pessi G."/>
            <person name="Zwahlen M.-C."/>
            <person name="Desiere F."/>
            <person name="Bork P."/>
            <person name="Delley M."/>
            <person name="Pridmore R.D."/>
            <person name="Arigoni F."/>
        </authorList>
    </citation>
    <scope>NUCLEOTIDE SEQUENCE [LARGE SCALE GENOMIC DNA]</scope>
    <source>
        <strain>NCC 2705</strain>
    </source>
</reference>
<keyword id="KW-1185">Reference proteome</keyword>
<keyword id="KW-0687">Ribonucleoprotein</keyword>
<keyword id="KW-0689">Ribosomal protein</keyword>
<organism>
    <name type="scientific">Bifidobacterium longum (strain NCC 2705)</name>
    <dbReference type="NCBI Taxonomy" id="206672"/>
    <lineage>
        <taxon>Bacteria</taxon>
        <taxon>Bacillati</taxon>
        <taxon>Actinomycetota</taxon>
        <taxon>Actinomycetes</taxon>
        <taxon>Bifidobacteriales</taxon>
        <taxon>Bifidobacteriaceae</taxon>
        <taxon>Bifidobacterium</taxon>
    </lineage>
</organism>
<feature type="chain" id="PRO_0000351980" description="Small ribosomal subunit protein uS2">
    <location>
        <begin position="1"/>
        <end position="281"/>
    </location>
</feature>
<feature type="region of interest" description="Disordered" evidence="2">
    <location>
        <begin position="233"/>
        <end position="281"/>
    </location>
</feature>
<feature type="compositionally biased region" description="Low complexity" evidence="2">
    <location>
        <begin position="255"/>
        <end position="275"/>
    </location>
</feature>
<accession>Q8G486</accession>
<sequence>MAQITMSDMLKAGLHFGHQTRRWNPKMKQFILTQRNGIHIINLFKSLDMIDKAYDFIKTTVAHNGTVLFVGTKKQAQEAIANQATRVNMPYVSERWLGGMLTNFQTVSKRVNRLKELEEMDFTDVHGSGLTKKELLLLEREKDKLNKQLGGIRNMNRTPSAMFVVDITKEALAVEEAHKLGIPVVAIVDTNADPDTVEYPIPANDDAIRGIELLTSLMADAVAEGLLERSGANKAEGEAAEQPMAAWEKELLTNEAPAEASAEAAAPAAAEGETAEAPKAE</sequence>
<gene>
    <name evidence="1" type="primary">rpsB</name>
    <name type="ordered locus">BL1503</name>
</gene>
<protein>
    <recommendedName>
        <fullName evidence="1">Small ribosomal subunit protein uS2</fullName>
    </recommendedName>
    <alternativeName>
        <fullName evidence="3">30S ribosomal protein S2</fullName>
    </alternativeName>
</protein>
<dbReference type="EMBL" id="AE014295">
    <property type="protein sequence ID" value="AAN25298.1"/>
    <property type="status" value="ALT_INIT"/>
    <property type="molecule type" value="Genomic_DNA"/>
</dbReference>
<dbReference type="RefSeq" id="NP_696662.2">
    <property type="nucleotide sequence ID" value="NC_004307.2"/>
</dbReference>
<dbReference type="RefSeq" id="WP_007056702.1">
    <property type="nucleotide sequence ID" value="NC_004307.2"/>
</dbReference>
<dbReference type="SMR" id="Q8G486"/>
<dbReference type="STRING" id="206672.BL1503"/>
<dbReference type="EnsemblBacteria" id="AAN25298">
    <property type="protein sequence ID" value="AAN25298"/>
    <property type="gene ID" value="BL1503"/>
</dbReference>
<dbReference type="GeneID" id="69578357"/>
<dbReference type="KEGG" id="blo:BL1503"/>
<dbReference type="PATRIC" id="fig|206672.9.peg.375"/>
<dbReference type="HOGENOM" id="CLU_040318_2_3_11"/>
<dbReference type="OrthoDB" id="9808036at2"/>
<dbReference type="PhylomeDB" id="Q8G486"/>
<dbReference type="Proteomes" id="UP000000439">
    <property type="component" value="Chromosome"/>
</dbReference>
<dbReference type="GO" id="GO:0022627">
    <property type="term" value="C:cytosolic small ribosomal subunit"/>
    <property type="evidence" value="ECO:0007669"/>
    <property type="project" value="TreeGrafter"/>
</dbReference>
<dbReference type="GO" id="GO:0003735">
    <property type="term" value="F:structural constituent of ribosome"/>
    <property type="evidence" value="ECO:0007669"/>
    <property type="project" value="InterPro"/>
</dbReference>
<dbReference type="GO" id="GO:0006412">
    <property type="term" value="P:translation"/>
    <property type="evidence" value="ECO:0007669"/>
    <property type="project" value="UniProtKB-UniRule"/>
</dbReference>
<dbReference type="CDD" id="cd01425">
    <property type="entry name" value="RPS2"/>
    <property type="match status" value="1"/>
</dbReference>
<dbReference type="FunFam" id="1.10.287.610:FF:000001">
    <property type="entry name" value="30S ribosomal protein S2"/>
    <property type="match status" value="1"/>
</dbReference>
<dbReference type="Gene3D" id="3.40.50.10490">
    <property type="entry name" value="Glucose-6-phosphate isomerase like protein, domain 1"/>
    <property type="match status" value="1"/>
</dbReference>
<dbReference type="Gene3D" id="1.10.287.610">
    <property type="entry name" value="Helix hairpin bin"/>
    <property type="match status" value="1"/>
</dbReference>
<dbReference type="HAMAP" id="MF_00291_B">
    <property type="entry name" value="Ribosomal_uS2_B"/>
    <property type="match status" value="1"/>
</dbReference>
<dbReference type="InterPro" id="IPR001865">
    <property type="entry name" value="Ribosomal_uS2"/>
</dbReference>
<dbReference type="InterPro" id="IPR005706">
    <property type="entry name" value="Ribosomal_uS2_bac/mit/plastid"/>
</dbReference>
<dbReference type="InterPro" id="IPR018130">
    <property type="entry name" value="Ribosomal_uS2_CS"/>
</dbReference>
<dbReference type="InterPro" id="IPR023591">
    <property type="entry name" value="Ribosomal_uS2_flav_dom_sf"/>
</dbReference>
<dbReference type="NCBIfam" id="TIGR01011">
    <property type="entry name" value="rpsB_bact"/>
    <property type="match status" value="1"/>
</dbReference>
<dbReference type="PANTHER" id="PTHR12534">
    <property type="entry name" value="30S RIBOSOMAL PROTEIN S2 PROKARYOTIC AND ORGANELLAR"/>
    <property type="match status" value="1"/>
</dbReference>
<dbReference type="PANTHER" id="PTHR12534:SF0">
    <property type="entry name" value="SMALL RIBOSOMAL SUBUNIT PROTEIN US2M"/>
    <property type="match status" value="1"/>
</dbReference>
<dbReference type="Pfam" id="PF00318">
    <property type="entry name" value="Ribosomal_S2"/>
    <property type="match status" value="1"/>
</dbReference>
<dbReference type="PRINTS" id="PR00395">
    <property type="entry name" value="RIBOSOMALS2"/>
</dbReference>
<dbReference type="SUPFAM" id="SSF52313">
    <property type="entry name" value="Ribosomal protein S2"/>
    <property type="match status" value="1"/>
</dbReference>
<dbReference type="PROSITE" id="PS00962">
    <property type="entry name" value="RIBOSOMAL_S2_1"/>
    <property type="match status" value="1"/>
</dbReference>
<dbReference type="PROSITE" id="PS00963">
    <property type="entry name" value="RIBOSOMAL_S2_2"/>
    <property type="match status" value="1"/>
</dbReference>
<evidence type="ECO:0000255" key="1">
    <source>
        <dbReference type="HAMAP-Rule" id="MF_00291"/>
    </source>
</evidence>
<evidence type="ECO:0000256" key="2">
    <source>
        <dbReference type="SAM" id="MobiDB-lite"/>
    </source>
</evidence>
<evidence type="ECO:0000305" key="3"/>
<name>RS2_BIFLO</name>